<feature type="chain" id="PRO_1000094530" description="3-dehydroquinate synthase">
    <location>
        <begin position="1"/>
        <end position="354"/>
    </location>
</feature>
<feature type="binding site" evidence="1">
    <location>
        <begin position="66"/>
        <end position="71"/>
    </location>
    <ligand>
        <name>NAD(+)</name>
        <dbReference type="ChEBI" id="CHEBI:57540"/>
    </ligand>
</feature>
<feature type="binding site" evidence="1">
    <location>
        <begin position="100"/>
        <end position="104"/>
    </location>
    <ligand>
        <name>NAD(+)</name>
        <dbReference type="ChEBI" id="CHEBI:57540"/>
    </ligand>
</feature>
<feature type="binding site" evidence="1">
    <location>
        <begin position="124"/>
        <end position="125"/>
    </location>
    <ligand>
        <name>NAD(+)</name>
        <dbReference type="ChEBI" id="CHEBI:57540"/>
    </ligand>
</feature>
<feature type="binding site" evidence="1">
    <location>
        <position position="137"/>
    </location>
    <ligand>
        <name>NAD(+)</name>
        <dbReference type="ChEBI" id="CHEBI:57540"/>
    </ligand>
</feature>
<feature type="binding site" evidence="1">
    <location>
        <position position="146"/>
    </location>
    <ligand>
        <name>NAD(+)</name>
        <dbReference type="ChEBI" id="CHEBI:57540"/>
    </ligand>
</feature>
<feature type="binding site" evidence="1">
    <location>
        <position position="179"/>
    </location>
    <ligand>
        <name>Zn(2+)</name>
        <dbReference type="ChEBI" id="CHEBI:29105"/>
    </ligand>
</feature>
<feature type="binding site" evidence="1">
    <location>
        <position position="242"/>
    </location>
    <ligand>
        <name>Zn(2+)</name>
        <dbReference type="ChEBI" id="CHEBI:29105"/>
    </ligand>
</feature>
<feature type="binding site" evidence="1">
    <location>
        <position position="259"/>
    </location>
    <ligand>
        <name>Zn(2+)</name>
        <dbReference type="ChEBI" id="CHEBI:29105"/>
    </ligand>
</feature>
<accession>A1WZA9</accession>
<organism>
    <name type="scientific">Halorhodospira halophila (strain DSM 244 / SL1)</name>
    <name type="common">Ectothiorhodospira halophila (strain DSM 244 / SL1)</name>
    <dbReference type="NCBI Taxonomy" id="349124"/>
    <lineage>
        <taxon>Bacteria</taxon>
        <taxon>Pseudomonadati</taxon>
        <taxon>Pseudomonadota</taxon>
        <taxon>Gammaproteobacteria</taxon>
        <taxon>Chromatiales</taxon>
        <taxon>Ectothiorhodospiraceae</taxon>
        <taxon>Halorhodospira</taxon>
    </lineage>
</organism>
<keyword id="KW-0028">Amino-acid biosynthesis</keyword>
<keyword id="KW-0057">Aromatic amino acid biosynthesis</keyword>
<keyword id="KW-0170">Cobalt</keyword>
<keyword id="KW-0963">Cytoplasm</keyword>
<keyword id="KW-0456">Lyase</keyword>
<keyword id="KW-0479">Metal-binding</keyword>
<keyword id="KW-0520">NAD</keyword>
<keyword id="KW-0547">Nucleotide-binding</keyword>
<keyword id="KW-1185">Reference proteome</keyword>
<keyword id="KW-0862">Zinc</keyword>
<reference key="1">
    <citation type="submission" date="2006-12" db="EMBL/GenBank/DDBJ databases">
        <title>Complete sequence of Halorhodospira halophila SL1.</title>
        <authorList>
            <consortium name="US DOE Joint Genome Institute"/>
            <person name="Copeland A."/>
            <person name="Lucas S."/>
            <person name="Lapidus A."/>
            <person name="Barry K."/>
            <person name="Detter J.C."/>
            <person name="Glavina del Rio T."/>
            <person name="Hammon N."/>
            <person name="Israni S."/>
            <person name="Dalin E."/>
            <person name="Tice H."/>
            <person name="Pitluck S."/>
            <person name="Saunders E."/>
            <person name="Brettin T."/>
            <person name="Bruce D."/>
            <person name="Han C."/>
            <person name="Tapia R."/>
            <person name="Schmutz J."/>
            <person name="Larimer F."/>
            <person name="Land M."/>
            <person name="Hauser L."/>
            <person name="Kyrpides N."/>
            <person name="Mikhailova N."/>
            <person name="Hoff W."/>
            <person name="Richardson P."/>
        </authorList>
    </citation>
    <scope>NUCLEOTIDE SEQUENCE [LARGE SCALE GENOMIC DNA]</scope>
    <source>
        <strain>DSM 244 / SL1</strain>
    </source>
</reference>
<protein>
    <recommendedName>
        <fullName evidence="1">3-dehydroquinate synthase</fullName>
        <shortName evidence="1">DHQS</shortName>
        <ecNumber evidence="1">4.2.3.4</ecNumber>
    </recommendedName>
</protein>
<gene>
    <name evidence="1" type="primary">aroB</name>
    <name type="ordered locus">Hhal_2257</name>
</gene>
<name>AROB_HALHL</name>
<proteinExistence type="inferred from homology"/>
<evidence type="ECO:0000255" key="1">
    <source>
        <dbReference type="HAMAP-Rule" id="MF_00110"/>
    </source>
</evidence>
<comment type="function">
    <text evidence="1">Catalyzes the conversion of 3-deoxy-D-arabino-heptulosonate 7-phosphate (DAHP) to dehydroquinate (DHQ).</text>
</comment>
<comment type="catalytic activity">
    <reaction evidence="1">
        <text>7-phospho-2-dehydro-3-deoxy-D-arabino-heptonate = 3-dehydroquinate + phosphate</text>
        <dbReference type="Rhea" id="RHEA:21968"/>
        <dbReference type="ChEBI" id="CHEBI:32364"/>
        <dbReference type="ChEBI" id="CHEBI:43474"/>
        <dbReference type="ChEBI" id="CHEBI:58394"/>
        <dbReference type="EC" id="4.2.3.4"/>
    </reaction>
</comment>
<comment type="cofactor">
    <cofactor evidence="1">
        <name>Co(2+)</name>
        <dbReference type="ChEBI" id="CHEBI:48828"/>
    </cofactor>
    <cofactor evidence="1">
        <name>Zn(2+)</name>
        <dbReference type="ChEBI" id="CHEBI:29105"/>
    </cofactor>
    <text evidence="1">Binds 1 divalent metal cation per subunit. Can use either Co(2+) or Zn(2+).</text>
</comment>
<comment type="cofactor">
    <cofactor evidence="1">
        <name>NAD(+)</name>
        <dbReference type="ChEBI" id="CHEBI:57540"/>
    </cofactor>
</comment>
<comment type="pathway">
    <text evidence="1">Metabolic intermediate biosynthesis; chorismate biosynthesis; chorismate from D-erythrose 4-phosphate and phosphoenolpyruvate: step 2/7.</text>
</comment>
<comment type="subcellular location">
    <subcellularLocation>
        <location evidence="1">Cytoplasm</location>
    </subcellularLocation>
</comment>
<comment type="similarity">
    <text evidence="1">Belongs to the sugar phosphate cyclases superfamily. Dehydroquinate synthase family.</text>
</comment>
<sequence length="354" mass="38390">MRTQWVELGERSYPIYIGDGVLDQGVLAEHLVADRALLVSNETVAPLYAERLAVPGAEVQSVTLHDGERYKTLQTCEQVYDALIEGRFDRSATVIALGGGVVGDMAGFCAATYQRGVGYIQVPTTLLAQVDSSVGGKTGVNHPRGKNMIGAFHQPRAVVADTGVLATLPEREYNAGLAEVVKYGLIRDPAFFDWLEAHVDALRRRDPEALAHAVAESCRNKAEVVAADEREAGERALLNLGHTFGHAIETYTDYCTWLHGEAVAAGMVMAARMSVRLGWLQRNGLERTIALLEAFGLPTRPPAIPEARFRELMSVDKKNRGGQLRLVLLRSVGDAVVTGEFAPEALTDTLVEAV</sequence>
<dbReference type="EC" id="4.2.3.4" evidence="1"/>
<dbReference type="EMBL" id="CP000544">
    <property type="protein sequence ID" value="ABM63021.1"/>
    <property type="molecule type" value="Genomic_DNA"/>
</dbReference>
<dbReference type="RefSeq" id="WP_011815043.1">
    <property type="nucleotide sequence ID" value="NC_008789.1"/>
</dbReference>
<dbReference type="SMR" id="A1WZA9"/>
<dbReference type="STRING" id="349124.Hhal_2257"/>
<dbReference type="KEGG" id="hha:Hhal_2257"/>
<dbReference type="eggNOG" id="COG0337">
    <property type="taxonomic scope" value="Bacteria"/>
</dbReference>
<dbReference type="HOGENOM" id="CLU_001201_0_2_6"/>
<dbReference type="OrthoDB" id="9806583at2"/>
<dbReference type="UniPathway" id="UPA00053">
    <property type="reaction ID" value="UER00085"/>
</dbReference>
<dbReference type="Proteomes" id="UP000000647">
    <property type="component" value="Chromosome"/>
</dbReference>
<dbReference type="GO" id="GO:0005737">
    <property type="term" value="C:cytoplasm"/>
    <property type="evidence" value="ECO:0007669"/>
    <property type="project" value="UniProtKB-SubCell"/>
</dbReference>
<dbReference type="GO" id="GO:0003856">
    <property type="term" value="F:3-dehydroquinate synthase activity"/>
    <property type="evidence" value="ECO:0007669"/>
    <property type="project" value="UniProtKB-UniRule"/>
</dbReference>
<dbReference type="GO" id="GO:0046872">
    <property type="term" value="F:metal ion binding"/>
    <property type="evidence" value="ECO:0007669"/>
    <property type="project" value="UniProtKB-KW"/>
</dbReference>
<dbReference type="GO" id="GO:0000166">
    <property type="term" value="F:nucleotide binding"/>
    <property type="evidence" value="ECO:0007669"/>
    <property type="project" value="UniProtKB-KW"/>
</dbReference>
<dbReference type="GO" id="GO:0008652">
    <property type="term" value="P:amino acid biosynthetic process"/>
    <property type="evidence" value="ECO:0007669"/>
    <property type="project" value="UniProtKB-KW"/>
</dbReference>
<dbReference type="GO" id="GO:0009073">
    <property type="term" value="P:aromatic amino acid family biosynthetic process"/>
    <property type="evidence" value="ECO:0007669"/>
    <property type="project" value="UniProtKB-KW"/>
</dbReference>
<dbReference type="GO" id="GO:0009423">
    <property type="term" value="P:chorismate biosynthetic process"/>
    <property type="evidence" value="ECO:0007669"/>
    <property type="project" value="UniProtKB-UniRule"/>
</dbReference>
<dbReference type="CDD" id="cd08195">
    <property type="entry name" value="DHQS"/>
    <property type="match status" value="1"/>
</dbReference>
<dbReference type="FunFam" id="3.40.50.1970:FF:000001">
    <property type="entry name" value="3-dehydroquinate synthase"/>
    <property type="match status" value="1"/>
</dbReference>
<dbReference type="Gene3D" id="3.40.50.1970">
    <property type="match status" value="1"/>
</dbReference>
<dbReference type="Gene3D" id="1.20.1090.10">
    <property type="entry name" value="Dehydroquinate synthase-like - alpha domain"/>
    <property type="match status" value="1"/>
</dbReference>
<dbReference type="HAMAP" id="MF_00110">
    <property type="entry name" value="DHQ_synthase"/>
    <property type="match status" value="1"/>
</dbReference>
<dbReference type="InterPro" id="IPR050071">
    <property type="entry name" value="Dehydroquinate_synthase"/>
</dbReference>
<dbReference type="InterPro" id="IPR016037">
    <property type="entry name" value="DHQ_synth_AroB"/>
</dbReference>
<dbReference type="InterPro" id="IPR030963">
    <property type="entry name" value="DHQ_synth_fam"/>
</dbReference>
<dbReference type="InterPro" id="IPR030960">
    <property type="entry name" value="DHQS/DOIS_N"/>
</dbReference>
<dbReference type="InterPro" id="IPR056179">
    <property type="entry name" value="DHQS_C"/>
</dbReference>
<dbReference type="NCBIfam" id="TIGR01357">
    <property type="entry name" value="aroB"/>
    <property type="match status" value="1"/>
</dbReference>
<dbReference type="PANTHER" id="PTHR43622">
    <property type="entry name" value="3-DEHYDROQUINATE SYNTHASE"/>
    <property type="match status" value="1"/>
</dbReference>
<dbReference type="PANTHER" id="PTHR43622:SF7">
    <property type="entry name" value="3-DEHYDROQUINATE SYNTHASE, CHLOROPLASTIC"/>
    <property type="match status" value="1"/>
</dbReference>
<dbReference type="Pfam" id="PF01761">
    <property type="entry name" value="DHQ_synthase"/>
    <property type="match status" value="1"/>
</dbReference>
<dbReference type="Pfam" id="PF24621">
    <property type="entry name" value="DHQS_C"/>
    <property type="match status" value="1"/>
</dbReference>
<dbReference type="PIRSF" id="PIRSF001455">
    <property type="entry name" value="DHQ_synth"/>
    <property type="match status" value="1"/>
</dbReference>
<dbReference type="SUPFAM" id="SSF56796">
    <property type="entry name" value="Dehydroquinate synthase-like"/>
    <property type="match status" value="1"/>
</dbReference>